<keyword id="KW-1003">Cell membrane</keyword>
<keyword id="KW-0472">Membrane</keyword>
<keyword id="KW-1185">Reference proteome</keyword>
<keyword id="KW-0812">Transmembrane</keyword>
<keyword id="KW-1133">Transmembrane helix</keyword>
<keyword id="KW-0813">Transport</keyword>
<sequence>MNQSYITIFFRTLFVISMTAGSIAAAYYSFPLTYPFLIALILSSVIHPVVDYLDKVTGFPRTINVLGVLAFFLLAAFGVLTILVAEIVTGTAYLAKTLPPHISTFISYCEKLFTTHIQPLYNELTLLFQELETNQQASIVTHIQTLGDSAAKNAGLLLSHILEMIPRFFALLPNTAAVLIFSLLATFFMTKDWHKLKAMLVLILPDRVTANSKAISSELKKAMTGFIKAQAVLVFITMVIVFIGLSLLKVEHAATIAFLIGLVDLLPYLGAGSVFVPWILYLSITGQLPQAIGIGILYLVVLIQRQLTEPKILSKSIGIDPLATLIALFAGFKLFGFLGLIAGPAVLVIIQAFITTGALKEIWSYITVQQK</sequence>
<dbReference type="EMBL" id="AF008220">
    <property type="protein sequence ID" value="AAC00405.1"/>
    <property type="molecule type" value="Genomic_DNA"/>
</dbReference>
<dbReference type="EMBL" id="AL009126">
    <property type="protein sequence ID" value="CAB14876.1"/>
    <property type="molecule type" value="Genomic_DNA"/>
</dbReference>
<dbReference type="PIR" id="C70002">
    <property type="entry name" value="C70002"/>
</dbReference>
<dbReference type="RefSeq" id="NP_390794.1">
    <property type="nucleotide sequence ID" value="NC_000964.3"/>
</dbReference>
<dbReference type="RefSeq" id="WP_004399115.1">
    <property type="nucleotide sequence ID" value="NZ_OZ025638.1"/>
</dbReference>
<dbReference type="SMR" id="O34991"/>
<dbReference type="FunCoup" id="O34991">
    <property type="interactions" value="7"/>
</dbReference>
<dbReference type="STRING" id="224308.BSU29160"/>
<dbReference type="TCDB" id="2.A.86.1.9">
    <property type="family name" value="the autoinducer-2 exporter (ai-2e) family (formerly the perm family, tc #9,b,22)"/>
</dbReference>
<dbReference type="PaxDb" id="224308-BSU29160"/>
<dbReference type="EnsemblBacteria" id="CAB14876">
    <property type="protein sequence ID" value="CAB14876"/>
    <property type="gene ID" value="BSU_29160"/>
</dbReference>
<dbReference type="GeneID" id="937380"/>
<dbReference type="KEGG" id="bsu:BSU29160"/>
<dbReference type="PATRIC" id="fig|224308.179.peg.3166"/>
<dbReference type="eggNOG" id="COG0628">
    <property type="taxonomic scope" value="Bacteria"/>
</dbReference>
<dbReference type="InParanoid" id="O34991"/>
<dbReference type="OrthoDB" id="9774361at2"/>
<dbReference type="PhylomeDB" id="O34991"/>
<dbReference type="BioCyc" id="BSUB:BSU29160-MONOMER"/>
<dbReference type="Proteomes" id="UP000001570">
    <property type="component" value="Chromosome"/>
</dbReference>
<dbReference type="GO" id="GO:0005886">
    <property type="term" value="C:plasma membrane"/>
    <property type="evidence" value="ECO:0007669"/>
    <property type="project" value="UniProtKB-SubCell"/>
</dbReference>
<dbReference type="GO" id="GO:0055085">
    <property type="term" value="P:transmembrane transport"/>
    <property type="evidence" value="ECO:0000318"/>
    <property type="project" value="GO_Central"/>
</dbReference>
<dbReference type="InterPro" id="IPR002549">
    <property type="entry name" value="AI-2E-like"/>
</dbReference>
<dbReference type="InterPro" id="IPR014227">
    <property type="entry name" value="YtvI-like"/>
</dbReference>
<dbReference type="NCBIfam" id="TIGR02872">
    <property type="entry name" value="spore_ytvI"/>
    <property type="match status" value="1"/>
</dbReference>
<dbReference type="PANTHER" id="PTHR21716">
    <property type="entry name" value="TRANSMEMBRANE PROTEIN"/>
    <property type="match status" value="1"/>
</dbReference>
<dbReference type="PANTHER" id="PTHR21716:SF68">
    <property type="entry name" value="TRANSPORT PROTEIN YTVI-RELATED"/>
    <property type="match status" value="1"/>
</dbReference>
<dbReference type="Pfam" id="PF01594">
    <property type="entry name" value="AI-2E_transport"/>
    <property type="match status" value="1"/>
</dbReference>
<reference key="1">
    <citation type="journal article" date="1997" name="Microbiology">
        <title>Sequencing and functional annotation of the Bacillus subtilis genes in the 200 kb rrnB-dnaB region.</title>
        <authorList>
            <person name="Lapidus A."/>
            <person name="Galleron N."/>
            <person name="Sorokin A."/>
            <person name="Ehrlich S.D."/>
        </authorList>
    </citation>
    <scope>NUCLEOTIDE SEQUENCE [GENOMIC DNA]</scope>
    <source>
        <strain>168</strain>
    </source>
</reference>
<reference key="2">
    <citation type="journal article" date="1997" name="Nature">
        <title>The complete genome sequence of the Gram-positive bacterium Bacillus subtilis.</title>
        <authorList>
            <person name="Kunst F."/>
            <person name="Ogasawara N."/>
            <person name="Moszer I."/>
            <person name="Albertini A.M."/>
            <person name="Alloni G."/>
            <person name="Azevedo V."/>
            <person name="Bertero M.G."/>
            <person name="Bessieres P."/>
            <person name="Bolotin A."/>
            <person name="Borchert S."/>
            <person name="Borriss R."/>
            <person name="Boursier L."/>
            <person name="Brans A."/>
            <person name="Braun M."/>
            <person name="Brignell S.C."/>
            <person name="Bron S."/>
            <person name="Brouillet S."/>
            <person name="Bruschi C.V."/>
            <person name="Caldwell B."/>
            <person name="Capuano V."/>
            <person name="Carter N.M."/>
            <person name="Choi S.-K."/>
            <person name="Codani J.-J."/>
            <person name="Connerton I.F."/>
            <person name="Cummings N.J."/>
            <person name="Daniel R.A."/>
            <person name="Denizot F."/>
            <person name="Devine K.M."/>
            <person name="Duesterhoeft A."/>
            <person name="Ehrlich S.D."/>
            <person name="Emmerson P.T."/>
            <person name="Entian K.-D."/>
            <person name="Errington J."/>
            <person name="Fabret C."/>
            <person name="Ferrari E."/>
            <person name="Foulger D."/>
            <person name="Fritz C."/>
            <person name="Fujita M."/>
            <person name="Fujita Y."/>
            <person name="Fuma S."/>
            <person name="Galizzi A."/>
            <person name="Galleron N."/>
            <person name="Ghim S.-Y."/>
            <person name="Glaser P."/>
            <person name="Goffeau A."/>
            <person name="Golightly E.J."/>
            <person name="Grandi G."/>
            <person name="Guiseppi G."/>
            <person name="Guy B.J."/>
            <person name="Haga K."/>
            <person name="Haiech J."/>
            <person name="Harwood C.R."/>
            <person name="Henaut A."/>
            <person name="Hilbert H."/>
            <person name="Holsappel S."/>
            <person name="Hosono S."/>
            <person name="Hullo M.-F."/>
            <person name="Itaya M."/>
            <person name="Jones L.-M."/>
            <person name="Joris B."/>
            <person name="Karamata D."/>
            <person name="Kasahara Y."/>
            <person name="Klaerr-Blanchard M."/>
            <person name="Klein C."/>
            <person name="Kobayashi Y."/>
            <person name="Koetter P."/>
            <person name="Koningstein G."/>
            <person name="Krogh S."/>
            <person name="Kumano M."/>
            <person name="Kurita K."/>
            <person name="Lapidus A."/>
            <person name="Lardinois S."/>
            <person name="Lauber J."/>
            <person name="Lazarevic V."/>
            <person name="Lee S.-M."/>
            <person name="Levine A."/>
            <person name="Liu H."/>
            <person name="Masuda S."/>
            <person name="Mauel C."/>
            <person name="Medigue C."/>
            <person name="Medina N."/>
            <person name="Mellado R.P."/>
            <person name="Mizuno M."/>
            <person name="Moestl D."/>
            <person name="Nakai S."/>
            <person name="Noback M."/>
            <person name="Noone D."/>
            <person name="O'Reilly M."/>
            <person name="Ogawa K."/>
            <person name="Ogiwara A."/>
            <person name="Oudega B."/>
            <person name="Park S.-H."/>
            <person name="Parro V."/>
            <person name="Pohl T.M."/>
            <person name="Portetelle D."/>
            <person name="Porwollik S."/>
            <person name="Prescott A.M."/>
            <person name="Presecan E."/>
            <person name="Pujic P."/>
            <person name="Purnelle B."/>
            <person name="Rapoport G."/>
            <person name="Rey M."/>
            <person name="Reynolds S."/>
            <person name="Rieger M."/>
            <person name="Rivolta C."/>
            <person name="Rocha E."/>
            <person name="Roche B."/>
            <person name="Rose M."/>
            <person name="Sadaie Y."/>
            <person name="Sato T."/>
            <person name="Scanlan E."/>
            <person name="Schleich S."/>
            <person name="Schroeter R."/>
            <person name="Scoffone F."/>
            <person name="Sekiguchi J."/>
            <person name="Sekowska A."/>
            <person name="Seror S.J."/>
            <person name="Serror P."/>
            <person name="Shin B.-S."/>
            <person name="Soldo B."/>
            <person name="Sorokin A."/>
            <person name="Tacconi E."/>
            <person name="Takagi T."/>
            <person name="Takahashi H."/>
            <person name="Takemaru K."/>
            <person name="Takeuchi M."/>
            <person name="Tamakoshi A."/>
            <person name="Tanaka T."/>
            <person name="Terpstra P."/>
            <person name="Tognoni A."/>
            <person name="Tosato V."/>
            <person name="Uchiyama S."/>
            <person name="Vandenbol M."/>
            <person name="Vannier F."/>
            <person name="Vassarotti A."/>
            <person name="Viari A."/>
            <person name="Wambutt R."/>
            <person name="Wedler E."/>
            <person name="Wedler H."/>
            <person name="Weitzenegger T."/>
            <person name="Winters P."/>
            <person name="Wipat A."/>
            <person name="Yamamoto H."/>
            <person name="Yamane K."/>
            <person name="Yasumoto K."/>
            <person name="Yata K."/>
            <person name="Yoshida K."/>
            <person name="Yoshikawa H.-F."/>
            <person name="Zumstein E."/>
            <person name="Yoshikawa H."/>
            <person name="Danchin A."/>
        </authorList>
    </citation>
    <scope>NUCLEOTIDE SEQUENCE [LARGE SCALE GENOMIC DNA]</scope>
    <source>
        <strain>168</strain>
    </source>
</reference>
<feature type="chain" id="PRO_0000148308" description="Putative transport protein YtvI">
    <location>
        <begin position="1"/>
        <end position="371"/>
    </location>
</feature>
<feature type="transmembrane region" description="Helical" evidence="1">
    <location>
        <begin position="6"/>
        <end position="26"/>
    </location>
</feature>
<feature type="transmembrane region" description="Helical" evidence="1">
    <location>
        <begin position="30"/>
        <end position="50"/>
    </location>
</feature>
<feature type="transmembrane region" description="Helical" evidence="1">
    <location>
        <begin position="65"/>
        <end position="85"/>
    </location>
</feature>
<feature type="transmembrane region" description="Helical" evidence="1">
    <location>
        <begin position="168"/>
        <end position="188"/>
    </location>
</feature>
<feature type="transmembrane region" description="Helical" evidence="1">
    <location>
        <begin position="225"/>
        <end position="245"/>
    </location>
</feature>
<feature type="transmembrane region" description="Helical" evidence="1">
    <location>
        <begin position="256"/>
        <end position="276"/>
    </location>
</feature>
<feature type="transmembrane region" description="Helical" evidence="1">
    <location>
        <begin position="283"/>
        <end position="303"/>
    </location>
</feature>
<feature type="transmembrane region" description="Helical" evidence="1">
    <location>
        <begin position="312"/>
        <end position="332"/>
    </location>
</feature>
<feature type="transmembrane region" description="Helical" evidence="1">
    <location>
        <begin position="334"/>
        <end position="354"/>
    </location>
</feature>
<comment type="subcellular location">
    <subcellularLocation>
        <location evidence="2">Cell membrane</location>
        <topology evidence="2">Multi-pass membrane protein</topology>
    </subcellularLocation>
</comment>
<comment type="similarity">
    <text evidence="2">Belongs to the autoinducer-2 exporter (AI-2E) (TC 2.A.86) family.</text>
</comment>
<protein>
    <recommendedName>
        <fullName>Putative transport protein YtvI</fullName>
    </recommendedName>
</protein>
<proteinExistence type="inferred from homology"/>
<accession>O34991</accession>
<evidence type="ECO:0000255" key="1"/>
<evidence type="ECO:0000305" key="2"/>
<organism>
    <name type="scientific">Bacillus subtilis (strain 168)</name>
    <dbReference type="NCBI Taxonomy" id="224308"/>
    <lineage>
        <taxon>Bacteria</taxon>
        <taxon>Bacillati</taxon>
        <taxon>Bacillota</taxon>
        <taxon>Bacilli</taxon>
        <taxon>Bacillales</taxon>
        <taxon>Bacillaceae</taxon>
        <taxon>Bacillus</taxon>
    </lineage>
</organism>
<name>YTVI_BACSU</name>
<gene>
    <name type="primary">ytvI</name>
    <name type="ordered locus">BSU29160</name>
</gene>